<protein>
    <recommendedName>
        <fullName evidence="1">Homoserine kinase</fullName>
        <shortName evidence="1">HK</shortName>
        <shortName evidence="1">HSK</shortName>
        <ecNumber evidence="1">2.7.1.39</ecNumber>
    </recommendedName>
</protein>
<dbReference type="EC" id="2.7.1.39" evidence="1"/>
<dbReference type="EMBL" id="CP000679">
    <property type="protein sequence ID" value="ABP66606.1"/>
    <property type="molecule type" value="Genomic_DNA"/>
</dbReference>
<dbReference type="RefSeq" id="WP_011916552.1">
    <property type="nucleotide sequence ID" value="NC_009437.1"/>
</dbReference>
<dbReference type="SMR" id="A4XI71"/>
<dbReference type="STRING" id="351627.Csac_0992"/>
<dbReference type="KEGG" id="csc:Csac_0992"/>
<dbReference type="eggNOG" id="COG0083">
    <property type="taxonomic scope" value="Bacteria"/>
</dbReference>
<dbReference type="HOGENOM" id="CLU_041243_0_2_9"/>
<dbReference type="OrthoDB" id="9769912at2"/>
<dbReference type="UniPathway" id="UPA00050">
    <property type="reaction ID" value="UER00064"/>
</dbReference>
<dbReference type="Proteomes" id="UP000000256">
    <property type="component" value="Chromosome"/>
</dbReference>
<dbReference type="GO" id="GO:0005737">
    <property type="term" value="C:cytoplasm"/>
    <property type="evidence" value="ECO:0007669"/>
    <property type="project" value="UniProtKB-SubCell"/>
</dbReference>
<dbReference type="GO" id="GO:0005524">
    <property type="term" value="F:ATP binding"/>
    <property type="evidence" value="ECO:0007669"/>
    <property type="project" value="UniProtKB-UniRule"/>
</dbReference>
<dbReference type="GO" id="GO:0004413">
    <property type="term" value="F:homoserine kinase activity"/>
    <property type="evidence" value="ECO:0007669"/>
    <property type="project" value="UniProtKB-UniRule"/>
</dbReference>
<dbReference type="GO" id="GO:0009088">
    <property type="term" value="P:threonine biosynthetic process"/>
    <property type="evidence" value="ECO:0007669"/>
    <property type="project" value="UniProtKB-UniRule"/>
</dbReference>
<dbReference type="Gene3D" id="3.30.230.10">
    <property type="match status" value="1"/>
</dbReference>
<dbReference type="Gene3D" id="3.30.70.890">
    <property type="entry name" value="GHMP kinase, C-terminal domain"/>
    <property type="match status" value="1"/>
</dbReference>
<dbReference type="HAMAP" id="MF_00384">
    <property type="entry name" value="Homoser_kinase"/>
    <property type="match status" value="1"/>
</dbReference>
<dbReference type="InterPro" id="IPR013750">
    <property type="entry name" value="GHMP_kinase_C_dom"/>
</dbReference>
<dbReference type="InterPro" id="IPR036554">
    <property type="entry name" value="GHMP_kinase_C_sf"/>
</dbReference>
<dbReference type="InterPro" id="IPR006204">
    <property type="entry name" value="GHMP_kinase_N_dom"/>
</dbReference>
<dbReference type="InterPro" id="IPR006203">
    <property type="entry name" value="GHMP_knse_ATP-bd_CS"/>
</dbReference>
<dbReference type="InterPro" id="IPR000870">
    <property type="entry name" value="Homoserine_kinase"/>
</dbReference>
<dbReference type="InterPro" id="IPR020568">
    <property type="entry name" value="Ribosomal_Su5_D2-typ_SF"/>
</dbReference>
<dbReference type="InterPro" id="IPR014721">
    <property type="entry name" value="Ribsml_uS5_D2-typ_fold_subgr"/>
</dbReference>
<dbReference type="NCBIfam" id="NF002288">
    <property type="entry name" value="PRK01212.1-4"/>
    <property type="match status" value="1"/>
</dbReference>
<dbReference type="NCBIfam" id="TIGR00191">
    <property type="entry name" value="thrB"/>
    <property type="match status" value="1"/>
</dbReference>
<dbReference type="PANTHER" id="PTHR20861:SF1">
    <property type="entry name" value="HOMOSERINE KINASE"/>
    <property type="match status" value="1"/>
</dbReference>
<dbReference type="PANTHER" id="PTHR20861">
    <property type="entry name" value="HOMOSERINE/4-DIPHOSPHOCYTIDYL-2-C-METHYL-D-ERYTHRITOL KINASE"/>
    <property type="match status" value="1"/>
</dbReference>
<dbReference type="Pfam" id="PF08544">
    <property type="entry name" value="GHMP_kinases_C"/>
    <property type="match status" value="1"/>
</dbReference>
<dbReference type="Pfam" id="PF00288">
    <property type="entry name" value="GHMP_kinases_N"/>
    <property type="match status" value="1"/>
</dbReference>
<dbReference type="PIRSF" id="PIRSF000676">
    <property type="entry name" value="Homoser_kin"/>
    <property type="match status" value="1"/>
</dbReference>
<dbReference type="PRINTS" id="PR00958">
    <property type="entry name" value="HOMSERKINASE"/>
</dbReference>
<dbReference type="SUPFAM" id="SSF55060">
    <property type="entry name" value="GHMP Kinase, C-terminal domain"/>
    <property type="match status" value="1"/>
</dbReference>
<dbReference type="SUPFAM" id="SSF54211">
    <property type="entry name" value="Ribosomal protein S5 domain 2-like"/>
    <property type="match status" value="1"/>
</dbReference>
<dbReference type="PROSITE" id="PS00627">
    <property type="entry name" value="GHMP_KINASES_ATP"/>
    <property type="match status" value="1"/>
</dbReference>
<organism>
    <name type="scientific">Caldicellulosiruptor saccharolyticus (strain ATCC 43494 / DSM 8903 / Tp8T 6331)</name>
    <dbReference type="NCBI Taxonomy" id="351627"/>
    <lineage>
        <taxon>Bacteria</taxon>
        <taxon>Bacillati</taxon>
        <taxon>Bacillota</taxon>
        <taxon>Bacillota incertae sedis</taxon>
        <taxon>Caldicellulosiruptorales</taxon>
        <taxon>Caldicellulosiruptoraceae</taxon>
        <taxon>Caldicellulosiruptor</taxon>
    </lineage>
</organism>
<accession>A4XI71</accession>
<proteinExistence type="inferred from homology"/>
<name>KHSE_CALS8</name>
<keyword id="KW-0028">Amino-acid biosynthesis</keyword>
<keyword id="KW-0067">ATP-binding</keyword>
<keyword id="KW-0963">Cytoplasm</keyword>
<keyword id="KW-0418">Kinase</keyword>
<keyword id="KW-0547">Nucleotide-binding</keyword>
<keyword id="KW-0791">Threonine biosynthesis</keyword>
<keyword id="KW-0808">Transferase</keyword>
<sequence>MISVKVPASSANLGAGFDCMGVALKLYNIIEVEEIEKGLEITSSPDDPSIAKDENNLVFKAMKVVFNEVGWYPKGLRINLINEIPLTRGLGSSAACISGGIYAANLLCGGKLSEEEMIFLAAKMEGHPDNSTPAMIGGLVFAVLEENKVNYIKFVVPNRLKFAVFIPDFQLSTEYARNILPKYIEFKDAVFNVGRAALFASAITTGNYDLLPAATQDRLHQPYRKNLIPDFDKIVNLSLEFGAKGAFLSGAGPSIIALIDENYDSFEQNVKLALSSLELKSKWDLMILEADNSGATVFSVQSSSSFKR</sequence>
<comment type="function">
    <text evidence="1">Catalyzes the ATP-dependent phosphorylation of L-homoserine to L-homoserine phosphate.</text>
</comment>
<comment type="catalytic activity">
    <reaction evidence="1">
        <text>L-homoserine + ATP = O-phospho-L-homoserine + ADP + H(+)</text>
        <dbReference type="Rhea" id="RHEA:13985"/>
        <dbReference type="ChEBI" id="CHEBI:15378"/>
        <dbReference type="ChEBI" id="CHEBI:30616"/>
        <dbReference type="ChEBI" id="CHEBI:57476"/>
        <dbReference type="ChEBI" id="CHEBI:57590"/>
        <dbReference type="ChEBI" id="CHEBI:456216"/>
        <dbReference type="EC" id="2.7.1.39"/>
    </reaction>
</comment>
<comment type="pathway">
    <text evidence="1">Amino-acid biosynthesis; L-threonine biosynthesis; L-threonine from L-aspartate: step 4/5.</text>
</comment>
<comment type="subcellular location">
    <subcellularLocation>
        <location evidence="1">Cytoplasm</location>
    </subcellularLocation>
</comment>
<comment type="similarity">
    <text evidence="1">Belongs to the GHMP kinase family. Homoserine kinase subfamily.</text>
</comment>
<evidence type="ECO:0000255" key="1">
    <source>
        <dbReference type="HAMAP-Rule" id="MF_00384"/>
    </source>
</evidence>
<gene>
    <name evidence="1" type="primary">thrB</name>
    <name type="ordered locus">Csac_0992</name>
</gene>
<reference key="1">
    <citation type="submission" date="2007-04" db="EMBL/GenBank/DDBJ databases">
        <title>Genome sequence of the thermophilic hydrogen-producing bacterium Caldicellulosiruptor saccharolyticus DSM 8903.</title>
        <authorList>
            <person name="Copeland A."/>
            <person name="Lucas S."/>
            <person name="Lapidus A."/>
            <person name="Barry K."/>
            <person name="Detter J.C."/>
            <person name="Glavina del Rio T."/>
            <person name="Hammon N."/>
            <person name="Israni S."/>
            <person name="Dalin E."/>
            <person name="Tice H."/>
            <person name="Pitluck S."/>
            <person name="Kiss H."/>
            <person name="Brettin T."/>
            <person name="Bruce D."/>
            <person name="Han C."/>
            <person name="Schmutz J."/>
            <person name="Larimer F."/>
            <person name="Land M."/>
            <person name="Hauser L."/>
            <person name="Kyrpides N."/>
            <person name="Lykidis A."/>
            <person name="van de Werken H.J.G."/>
            <person name="Verhaart M.R.A."/>
            <person name="VanFossen A.L."/>
            <person name="Lewis D.L."/>
            <person name="Nichols J.D."/>
            <person name="Goorissen H.P."/>
            <person name="van Niel E.W.J."/>
            <person name="Stams F.J.M."/>
            <person name="Willquist K.U."/>
            <person name="Ward D.E."/>
            <person name="van der Oost J."/>
            <person name="Kelly R.M."/>
            <person name="Kengen S.M.W."/>
            <person name="Richardson P."/>
        </authorList>
    </citation>
    <scope>NUCLEOTIDE SEQUENCE [LARGE SCALE GENOMIC DNA]</scope>
    <source>
        <strain>ATCC 43494 / DSM 8903 / Tp8T 6331</strain>
    </source>
</reference>
<feature type="chain" id="PRO_1000049112" description="Homoserine kinase">
    <location>
        <begin position="1"/>
        <end position="308"/>
    </location>
</feature>
<feature type="binding site" evidence="1">
    <location>
        <begin position="85"/>
        <end position="95"/>
    </location>
    <ligand>
        <name>ATP</name>
        <dbReference type="ChEBI" id="CHEBI:30616"/>
    </ligand>
</feature>